<gene>
    <name evidence="1" type="primary">clpP</name>
    <name type="ordered locus">Saro_3055</name>
</gene>
<comment type="function">
    <text evidence="1">Cleaves peptides in various proteins in a process that requires ATP hydrolysis. Has a chymotrypsin-like activity. Plays a major role in the degradation of misfolded proteins.</text>
</comment>
<comment type="catalytic activity">
    <reaction evidence="1">
        <text>Hydrolysis of proteins to small peptides in the presence of ATP and magnesium. alpha-casein is the usual test substrate. In the absence of ATP, only oligopeptides shorter than five residues are hydrolyzed (such as succinyl-Leu-Tyr-|-NHMec, and Leu-Tyr-Leu-|-Tyr-Trp, in which cleavage of the -Tyr-|-Leu- and -Tyr-|-Trp bonds also occurs).</text>
        <dbReference type="EC" id="3.4.21.92"/>
    </reaction>
</comment>
<comment type="subunit">
    <text evidence="1">Fourteen ClpP subunits assemble into 2 heptameric rings which stack back to back to give a disk-like structure with a central cavity, resembling the structure of eukaryotic proteasomes.</text>
</comment>
<comment type="subcellular location">
    <subcellularLocation>
        <location evidence="1">Cytoplasm</location>
    </subcellularLocation>
</comment>
<comment type="similarity">
    <text evidence="1">Belongs to the peptidase S14 family.</text>
</comment>
<keyword id="KW-0963">Cytoplasm</keyword>
<keyword id="KW-0378">Hydrolase</keyword>
<keyword id="KW-0645">Protease</keyword>
<keyword id="KW-1185">Reference proteome</keyword>
<keyword id="KW-0720">Serine protease</keyword>
<accession>Q2G3T3</accession>
<reference key="1">
    <citation type="submission" date="2006-01" db="EMBL/GenBank/DDBJ databases">
        <title>Complete sequence of Novosphingobium aromaticivorans DSM 12444.</title>
        <authorList>
            <consortium name="US DOE Joint Genome Institute"/>
            <person name="Copeland A."/>
            <person name="Lucas S."/>
            <person name="Lapidus A."/>
            <person name="Barry K."/>
            <person name="Detter J.C."/>
            <person name="Glavina T."/>
            <person name="Hammon N."/>
            <person name="Israni S."/>
            <person name="Pitluck S."/>
            <person name="Chain P."/>
            <person name="Malfatti S."/>
            <person name="Shin M."/>
            <person name="Vergez L."/>
            <person name="Schmutz J."/>
            <person name="Larimer F."/>
            <person name="Land M."/>
            <person name="Kyrpides N."/>
            <person name="Ivanova N."/>
            <person name="Fredrickson J."/>
            <person name="Balkwill D."/>
            <person name="Romine M.F."/>
            <person name="Richardson P."/>
        </authorList>
    </citation>
    <scope>NUCLEOTIDE SEQUENCE [LARGE SCALE GENOMIC DNA]</scope>
    <source>
        <strain>ATCC 700278 / DSM 12444 / CCUG 56034 / CIP 105152 / NBRC 16084 / F199</strain>
    </source>
</reference>
<dbReference type="EC" id="3.4.21.92" evidence="1"/>
<dbReference type="EMBL" id="CP000248">
    <property type="protein sequence ID" value="ABD27490.1"/>
    <property type="molecule type" value="Genomic_DNA"/>
</dbReference>
<dbReference type="RefSeq" id="WP_011446694.1">
    <property type="nucleotide sequence ID" value="NC_007794.1"/>
</dbReference>
<dbReference type="SMR" id="Q2G3T3"/>
<dbReference type="STRING" id="279238.Saro_3055"/>
<dbReference type="MEROPS" id="S14.001"/>
<dbReference type="KEGG" id="nar:Saro_3055"/>
<dbReference type="eggNOG" id="COG0740">
    <property type="taxonomic scope" value="Bacteria"/>
</dbReference>
<dbReference type="HOGENOM" id="CLU_058707_3_0_5"/>
<dbReference type="Proteomes" id="UP000009134">
    <property type="component" value="Chromosome"/>
</dbReference>
<dbReference type="GO" id="GO:0005737">
    <property type="term" value="C:cytoplasm"/>
    <property type="evidence" value="ECO:0007669"/>
    <property type="project" value="UniProtKB-SubCell"/>
</dbReference>
<dbReference type="GO" id="GO:0009368">
    <property type="term" value="C:endopeptidase Clp complex"/>
    <property type="evidence" value="ECO:0007669"/>
    <property type="project" value="TreeGrafter"/>
</dbReference>
<dbReference type="GO" id="GO:0004176">
    <property type="term" value="F:ATP-dependent peptidase activity"/>
    <property type="evidence" value="ECO:0007669"/>
    <property type="project" value="InterPro"/>
</dbReference>
<dbReference type="GO" id="GO:0051117">
    <property type="term" value="F:ATPase binding"/>
    <property type="evidence" value="ECO:0007669"/>
    <property type="project" value="TreeGrafter"/>
</dbReference>
<dbReference type="GO" id="GO:0004252">
    <property type="term" value="F:serine-type endopeptidase activity"/>
    <property type="evidence" value="ECO:0007669"/>
    <property type="project" value="UniProtKB-UniRule"/>
</dbReference>
<dbReference type="GO" id="GO:0006515">
    <property type="term" value="P:protein quality control for misfolded or incompletely synthesized proteins"/>
    <property type="evidence" value="ECO:0007669"/>
    <property type="project" value="TreeGrafter"/>
</dbReference>
<dbReference type="CDD" id="cd07017">
    <property type="entry name" value="S14_ClpP_2"/>
    <property type="match status" value="1"/>
</dbReference>
<dbReference type="FunFam" id="3.90.226.10:FF:000001">
    <property type="entry name" value="ATP-dependent Clp protease proteolytic subunit"/>
    <property type="match status" value="1"/>
</dbReference>
<dbReference type="Gene3D" id="3.90.226.10">
    <property type="entry name" value="2-enoyl-CoA Hydratase, Chain A, domain 1"/>
    <property type="match status" value="1"/>
</dbReference>
<dbReference type="HAMAP" id="MF_00444">
    <property type="entry name" value="ClpP"/>
    <property type="match status" value="1"/>
</dbReference>
<dbReference type="InterPro" id="IPR001907">
    <property type="entry name" value="ClpP"/>
</dbReference>
<dbReference type="InterPro" id="IPR029045">
    <property type="entry name" value="ClpP/crotonase-like_dom_sf"/>
</dbReference>
<dbReference type="InterPro" id="IPR023562">
    <property type="entry name" value="ClpP/TepA"/>
</dbReference>
<dbReference type="InterPro" id="IPR033135">
    <property type="entry name" value="ClpP_His_AS"/>
</dbReference>
<dbReference type="InterPro" id="IPR018215">
    <property type="entry name" value="ClpP_Ser_AS"/>
</dbReference>
<dbReference type="NCBIfam" id="TIGR00493">
    <property type="entry name" value="clpP"/>
    <property type="match status" value="1"/>
</dbReference>
<dbReference type="NCBIfam" id="NF001368">
    <property type="entry name" value="PRK00277.1"/>
    <property type="match status" value="1"/>
</dbReference>
<dbReference type="NCBIfam" id="NF009205">
    <property type="entry name" value="PRK12553.1"/>
    <property type="match status" value="1"/>
</dbReference>
<dbReference type="PANTHER" id="PTHR10381">
    <property type="entry name" value="ATP-DEPENDENT CLP PROTEASE PROTEOLYTIC SUBUNIT"/>
    <property type="match status" value="1"/>
</dbReference>
<dbReference type="PANTHER" id="PTHR10381:SF11">
    <property type="entry name" value="ATP-DEPENDENT CLP PROTEASE PROTEOLYTIC SUBUNIT, MITOCHONDRIAL"/>
    <property type="match status" value="1"/>
</dbReference>
<dbReference type="Pfam" id="PF00574">
    <property type="entry name" value="CLP_protease"/>
    <property type="match status" value="1"/>
</dbReference>
<dbReference type="PRINTS" id="PR00127">
    <property type="entry name" value="CLPPROTEASEP"/>
</dbReference>
<dbReference type="SUPFAM" id="SSF52096">
    <property type="entry name" value="ClpP/crotonase"/>
    <property type="match status" value="1"/>
</dbReference>
<dbReference type="PROSITE" id="PS00382">
    <property type="entry name" value="CLP_PROTEASE_HIS"/>
    <property type="match status" value="1"/>
</dbReference>
<dbReference type="PROSITE" id="PS00381">
    <property type="entry name" value="CLP_PROTEASE_SER"/>
    <property type="match status" value="1"/>
</dbReference>
<feature type="chain" id="PRO_0000236396" description="ATP-dependent Clp protease proteolytic subunit">
    <location>
        <begin position="1"/>
        <end position="235"/>
    </location>
</feature>
<feature type="active site" description="Nucleophile" evidence="1">
    <location>
        <position position="123"/>
    </location>
</feature>
<feature type="active site" evidence="1">
    <location>
        <position position="148"/>
    </location>
</feature>
<sequence>MLDLFGASSAPTFGNQGKFTTDPVTGALIPVVVEQSSRGERSFDIYSRLLRERIIFVTGEVEDHMASVIIAQLLFLESENPSKDISMYINSPGGVVTAGLAIYDTMQYIRPRVSTVCIGQAASMGSFLLAAGEPGMRIALPNARIMIHQPSGGARGMASDIEIQAREILRIRKRMNDLYVKFTGRSLDEIEKAMDRDTFLEAEEAMKFGLVDKVFESRPATDSVGEGEGSGGAPA</sequence>
<evidence type="ECO:0000255" key="1">
    <source>
        <dbReference type="HAMAP-Rule" id="MF_00444"/>
    </source>
</evidence>
<protein>
    <recommendedName>
        <fullName evidence="1">ATP-dependent Clp protease proteolytic subunit</fullName>
        <ecNumber evidence="1">3.4.21.92</ecNumber>
    </recommendedName>
    <alternativeName>
        <fullName evidence="1">Endopeptidase Clp</fullName>
    </alternativeName>
</protein>
<organism>
    <name type="scientific">Novosphingobium aromaticivorans (strain ATCC 700278 / DSM 12444 / CCUG 56034 / CIP 105152 / NBRC 16084 / F199)</name>
    <dbReference type="NCBI Taxonomy" id="279238"/>
    <lineage>
        <taxon>Bacteria</taxon>
        <taxon>Pseudomonadati</taxon>
        <taxon>Pseudomonadota</taxon>
        <taxon>Alphaproteobacteria</taxon>
        <taxon>Sphingomonadales</taxon>
        <taxon>Sphingomonadaceae</taxon>
        <taxon>Novosphingobium</taxon>
    </lineage>
</organism>
<proteinExistence type="inferred from homology"/>
<name>CLPP_NOVAD</name>